<name>RL25_DESRM</name>
<sequence length="210" mass="22450">MADTALNANLRKTATKSIVKEIRNNGGIPGVVYGKHVGSMAISVDAKDLKNILGSVTGRNTLINMNINGSKQTVMVKSLQMDPMHQNIRHVDFQQVSENTKIRTVIPVQLVGTPKGVAMGGVIQHDLRSAEIECLPNRIPEAIQVDISGLEIGDTLSVSDLNLPPGVKILDHPHTTVVGLATIKAPEPAGQPEVPPEPAEEAKAKTIEKE</sequence>
<comment type="function">
    <text evidence="1">This is one of the proteins that binds to the 5S RNA in the ribosome where it forms part of the central protuberance.</text>
</comment>
<comment type="subunit">
    <text evidence="1">Part of the 50S ribosomal subunit; part of the 5S rRNA/L5/L18/L25 subcomplex. Contacts the 5S rRNA. Binds to the 5S rRNA independently of L5 and L18.</text>
</comment>
<comment type="similarity">
    <text evidence="1">Belongs to the bacterial ribosomal protein bL25 family. CTC subfamily.</text>
</comment>
<dbReference type="EMBL" id="CP000612">
    <property type="protein sequence ID" value="ABO48658.1"/>
    <property type="molecule type" value="Genomic_DNA"/>
</dbReference>
<dbReference type="RefSeq" id="WP_011876502.1">
    <property type="nucleotide sequence ID" value="NC_009253.1"/>
</dbReference>
<dbReference type="SMR" id="A4J0Q5"/>
<dbReference type="STRING" id="349161.Dred_0108"/>
<dbReference type="KEGG" id="drm:Dred_0108"/>
<dbReference type="eggNOG" id="COG1825">
    <property type="taxonomic scope" value="Bacteria"/>
</dbReference>
<dbReference type="HOGENOM" id="CLU_075939_2_1_9"/>
<dbReference type="OrthoDB" id="9790002at2"/>
<dbReference type="Proteomes" id="UP000001556">
    <property type="component" value="Chromosome"/>
</dbReference>
<dbReference type="GO" id="GO:0022625">
    <property type="term" value="C:cytosolic large ribosomal subunit"/>
    <property type="evidence" value="ECO:0007669"/>
    <property type="project" value="TreeGrafter"/>
</dbReference>
<dbReference type="GO" id="GO:0008097">
    <property type="term" value="F:5S rRNA binding"/>
    <property type="evidence" value="ECO:0007669"/>
    <property type="project" value="InterPro"/>
</dbReference>
<dbReference type="GO" id="GO:0003735">
    <property type="term" value="F:structural constituent of ribosome"/>
    <property type="evidence" value="ECO:0007669"/>
    <property type="project" value="InterPro"/>
</dbReference>
<dbReference type="GO" id="GO:0006412">
    <property type="term" value="P:translation"/>
    <property type="evidence" value="ECO:0007669"/>
    <property type="project" value="UniProtKB-UniRule"/>
</dbReference>
<dbReference type="CDD" id="cd00495">
    <property type="entry name" value="Ribosomal_L25_TL5_CTC"/>
    <property type="match status" value="1"/>
</dbReference>
<dbReference type="Gene3D" id="2.170.120.20">
    <property type="entry name" value="Ribosomal protein L25, beta domain"/>
    <property type="match status" value="1"/>
</dbReference>
<dbReference type="Gene3D" id="2.40.240.10">
    <property type="entry name" value="Ribosomal Protein L25, Chain P"/>
    <property type="match status" value="1"/>
</dbReference>
<dbReference type="HAMAP" id="MF_01334">
    <property type="entry name" value="Ribosomal_bL25_CTC"/>
    <property type="match status" value="1"/>
</dbReference>
<dbReference type="InterPro" id="IPR020056">
    <property type="entry name" value="Rbsml_bL25/Gln-tRNA_synth_N"/>
</dbReference>
<dbReference type="InterPro" id="IPR011035">
    <property type="entry name" value="Ribosomal_bL25/Gln-tRNA_synth"/>
</dbReference>
<dbReference type="InterPro" id="IPR020057">
    <property type="entry name" value="Ribosomal_bL25_b-dom"/>
</dbReference>
<dbReference type="InterPro" id="IPR037121">
    <property type="entry name" value="Ribosomal_bL25_C"/>
</dbReference>
<dbReference type="InterPro" id="IPR001021">
    <property type="entry name" value="Ribosomal_bL25_long"/>
</dbReference>
<dbReference type="InterPro" id="IPR029751">
    <property type="entry name" value="Ribosomal_L25_dom"/>
</dbReference>
<dbReference type="InterPro" id="IPR020930">
    <property type="entry name" value="Ribosomal_uL5_bac-type"/>
</dbReference>
<dbReference type="NCBIfam" id="TIGR00731">
    <property type="entry name" value="bL25_bact_ctc"/>
    <property type="match status" value="1"/>
</dbReference>
<dbReference type="PANTHER" id="PTHR33284">
    <property type="entry name" value="RIBOSOMAL PROTEIN L25/GLN-TRNA SYNTHETASE, ANTI-CODON-BINDING DOMAIN-CONTAINING PROTEIN"/>
    <property type="match status" value="1"/>
</dbReference>
<dbReference type="PANTHER" id="PTHR33284:SF1">
    <property type="entry name" value="RIBOSOMAL PROTEIN L25_GLN-TRNA SYNTHETASE, ANTI-CODON-BINDING DOMAIN-CONTAINING PROTEIN"/>
    <property type="match status" value="1"/>
</dbReference>
<dbReference type="Pfam" id="PF01386">
    <property type="entry name" value="Ribosomal_L25p"/>
    <property type="match status" value="1"/>
</dbReference>
<dbReference type="Pfam" id="PF14693">
    <property type="entry name" value="Ribosomal_TL5_C"/>
    <property type="match status" value="1"/>
</dbReference>
<dbReference type="SUPFAM" id="SSF50715">
    <property type="entry name" value="Ribosomal protein L25-like"/>
    <property type="match status" value="1"/>
</dbReference>
<organism>
    <name type="scientific">Desulforamulus reducens (strain ATCC BAA-1160 / DSM 100696 / MI-1)</name>
    <name type="common">Desulfotomaculum reducens</name>
    <dbReference type="NCBI Taxonomy" id="349161"/>
    <lineage>
        <taxon>Bacteria</taxon>
        <taxon>Bacillati</taxon>
        <taxon>Bacillota</taxon>
        <taxon>Clostridia</taxon>
        <taxon>Eubacteriales</taxon>
        <taxon>Peptococcaceae</taxon>
        <taxon>Desulforamulus</taxon>
    </lineage>
</organism>
<accession>A4J0Q5</accession>
<feature type="chain" id="PRO_1000073296" description="Large ribosomal subunit protein bL25">
    <location>
        <begin position="1"/>
        <end position="210"/>
    </location>
</feature>
<feature type="region of interest" description="Disordered" evidence="2">
    <location>
        <begin position="185"/>
        <end position="210"/>
    </location>
</feature>
<feature type="compositionally biased region" description="Basic and acidic residues" evidence="2">
    <location>
        <begin position="200"/>
        <end position="210"/>
    </location>
</feature>
<gene>
    <name evidence="1" type="primary">rplY</name>
    <name evidence="1" type="synonym">ctc</name>
    <name type="ordered locus">Dred_0108</name>
</gene>
<evidence type="ECO:0000255" key="1">
    <source>
        <dbReference type="HAMAP-Rule" id="MF_01334"/>
    </source>
</evidence>
<evidence type="ECO:0000256" key="2">
    <source>
        <dbReference type="SAM" id="MobiDB-lite"/>
    </source>
</evidence>
<evidence type="ECO:0000305" key="3"/>
<protein>
    <recommendedName>
        <fullName evidence="1">Large ribosomal subunit protein bL25</fullName>
    </recommendedName>
    <alternativeName>
        <fullName evidence="3">50S ribosomal protein L25</fullName>
    </alternativeName>
    <alternativeName>
        <fullName evidence="1">General stress protein CTC</fullName>
    </alternativeName>
</protein>
<reference key="1">
    <citation type="submission" date="2007-03" db="EMBL/GenBank/DDBJ databases">
        <title>Complete sequence of Desulfotomaculum reducens MI-1.</title>
        <authorList>
            <consortium name="US DOE Joint Genome Institute"/>
            <person name="Copeland A."/>
            <person name="Lucas S."/>
            <person name="Lapidus A."/>
            <person name="Barry K."/>
            <person name="Detter J.C."/>
            <person name="Glavina del Rio T."/>
            <person name="Hammon N."/>
            <person name="Israni S."/>
            <person name="Dalin E."/>
            <person name="Tice H."/>
            <person name="Pitluck S."/>
            <person name="Sims D."/>
            <person name="Brettin T."/>
            <person name="Bruce D."/>
            <person name="Han C."/>
            <person name="Tapia R."/>
            <person name="Schmutz J."/>
            <person name="Larimer F."/>
            <person name="Land M."/>
            <person name="Hauser L."/>
            <person name="Kyrpides N."/>
            <person name="Kim E."/>
            <person name="Tebo B.M."/>
            <person name="Richardson P."/>
        </authorList>
    </citation>
    <scope>NUCLEOTIDE SEQUENCE [LARGE SCALE GENOMIC DNA]</scope>
    <source>
        <strain>ATCC BAA-1160 / DSM 100696 / MI-1</strain>
    </source>
</reference>
<proteinExistence type="inferred from homology"/>
<keyword id="KW-1185">Reference proteome</keyword>
<keyword id="KW-0687">Ribonucleoprotein</keyword>
<keyword id="KW-0689">Ribosomal protein</keyword>
<keyword id="KW-0694">RNA-binding</keyword>
<keyword id="KW-0699">rRNA-binding</keyword>